<comment type="function">
    <text evidence="1">Core subunit of the mitochondrial membrane respiratory chain NADH dehydrogenase (Complex I) that is believed to belong to the minimal assembly required for catalysis. Complex I functions in the transfer of electrons from NADH to the respiratory chain. The immediate electron acceptor for the enzyme is believed to be ubiquinone (By similarity).</text>
</comment>
<comment type="catalytic activity">
    <reaction>
        <text>a ubiquinone + NADH + 5 H(+)(in) = a ubiquinol + NAD(+) + 4 H(+)(out)</text>
        <dbReference type="Rhea" id="RHEA:29091"/>
        <dbReference type="Rhea" id="RHEA-COMP:9565"/>
        <dbReference type="Rhea" id="RHEA-COMP:9566"/>
        <dbReference type="ChEBI" id="CHEBI:15378"/>
        <dbReference type="ChEBI" id="CHEBI:16389"/>
        <dbReference type="ChEBI" id="CHEBI:17976"/>
        <dbReference type="ChEBI" id="CHEBI:57540"/>
        <dbReference type="ChEBI" id="CHEBI:57945"/>
        <dbReference type="EC" id="7.1.1.2"/>
    </reaction>
</comment>
<comment type="subcellular location">
    <subcellularLocation>
        <location evidence="1">Mitochondrion membrane</location>
        <topology evidence="1">Multi-pass membrane protein</topology>
    </subcellularLocation>
</comment>
<comment type="similarity">
    <text evidence="3">Belongs to the complex I subunit 4L family.</text>
</comment>
<dbReference type="EC" id="7.1.1.2"/>
<dbReference type="EMBL" id="AF000023">
    <property type="protein sequence ID" value="AAC04632.1"/>
    <property type="molecule type" value="Genomic_DNA"/>
</dbReference>
<dbReference type="PIR" id="T11886">
    <property type="entry name" value="T11886"/>
</dbReference>
<dbReference type="RefSeq" id="NP_009255.1">
    <property type="nucleotide sequence ID" value="NC_000933.1"/>
</dbReference>
<dbReference type="SMR" id="O47492"/>
<dbReference type="GeneID" id="808770"/>
<dbReference type="CTD" id="4539"/>
<dbReference type="GO" id="GO:0031966">
    <property type="term" value="C:mitochondrial membrane"/>
    <property type="evidence" value="ECO:0007669"/>
    <property type="project" value="UniProtKB-SubCell"/>
</dbReference>
<dbReference type="GO" id="GO:0030964">
    <property type="term" value="C:NADH dehydrogenase complex"/>
    <property type="evidence" value="ECO:0007669"/>
    <property type="project" value="TreeGrafter"/>
</dbReference>
<dbReference type="GO" id="GO:0008137">
    <property type="term" value="F:NADH dehydrogenase (ubiquinone) activity"/>
    <property type="evidence" value="ECO:0007669"/>
    <property type="project" value="UniProtKB-EC"/>
</dbReference>
<dbReference type="GO" id="GO:0042773">
    <property type="term" value="P:ATP synthesis coupled electron transport"/>
    <property type="evidence" value="ECO:0007669"/>
    <property type="project" value="InterPro"/>
</dbReference>
<dbReference type="FunFam" id="1.10.287.3510:FF:000004">
    <property type="entry name" value="NADH-ubiquinone oxidoreductase chain 4L"/>
    <property type="match status" value="1"/>
</dbReference>
<dbReference type="Gene3D" id="1.10.287.3510">
    <property type="match status" value="1"/>
</dbReference>
<dbReference type="HAMAP" id="MF_01456">
    <property type="entry name" value="NDH1_NuoK"/>
    <property type="match status" value="1"/>
</dbReference>
<dbReference type="InterPro" id="IPR001133">
    <property type="entry name" value="NADH_UbQ_OxRdtase_chain4L/K"/>
</dbReference>
<dbReference type="InterPro" id="IPR039428">
    <property type="entry name" value="NUOK/Mnh_C1-like"/>
</dbReference>
<dbReference type="NCBIfam" id="NF004320">
    <property type="entry name" value="PRK05715.1-2"/>
    <property type="match status" value="1"/>
</dbReference>
<dbReference type="NCBIfam" id="NF004323">
    <property type="entry name" value="PRK05715.1-5"/>
    <property type="match status" value="1"/>
</dbReference>
<dbReference type="PANTHER" id="PTHR11434:SF16">
    <property type="entry name" value="NADH-UBIQUINONE OXIDOREDUCTASE CHAIN 4L"/>
    <property type="match status" value="1"/>
</dbReference>
<dbReference type="PANTHER" id="PTHR11434">
    <property type="entry name" value="NADH-UBIQUINONE OXIDOREDUCTASE SUBUNIT ND4L"/>
    <property type="match status" value="1"/>
</dbReference>
<dbReference type="Pfam" id="PF00420">
    <property type="entry name" value="Oxidored_q2"/>
    <property type="match status" value="1"/>
</dbReference>
<gene>
    <name type="primary">ND4L</name>
</gene>
<keyword id="KW-0249">Electron transport</keyword>
<keyword id="KW-0472">Membrane</keyword>
<keyword id="KW-0496">Mitochondrion</keyword>
<keyword id="KW-0520">NAD</keyword>
<keyword id="KW-0679">Respiratory chain</keyword>
<keyword id="KW-1278">Translocase</keyword>
<keyword id="KW-0812">Transmembrane</keyword>
<keyword id="KW-1133">Transmembrane helix</keyword>
<keyword id="KW-0813">Transport</keyword>
<keyword id="KW-0830">Ubiquinone</keyword>
<accession>O47492</accession>
<protein>
    <recommendedName>
        <fullName>NADH-ubiquinone oxidoreductase chain 4L</fullName>
        <ecNumber>7.1.1.2</ecNumber>
    </recommendedName>
    <alternativeName>
        <fullName>NADH dehydrogenase subunit 4L</fullName>
    </alternativeName>
</protein>
<feature type="chain" id="PRO_0000118446" description="NADH-ubiquinone oxidoreductase chain 4L">
    <location>
        <begin position="1"/>
        <end position="99"/>
    </location>
</feature>
<feature type="transmembrane region" description="Helical" evidence="2">
    <location>
        <begin position="2"/>
        <end position="22"/>
    </location>
</feature>
<feature type="transmembrane region" description="Helical" evidence="2">
    <location>
        <begin position="27"/>
        <end position="47"/>
    </location>
</feature>
<feature type="transmembrane region" description="Helical" evidence="2">
    <location>
        <begin position="59"/>
        <end position="79"/>
    </location>
</feature>
<sequence length="99" mass="11036">MYYRYMIVAILLLLLGVLGIVLNRGHLIIMLMSIELILLAASFLFLINSMITDTLIEQVFTIMVLTVAAAESSIGLAIMVAYYRIKGTIAIKSLNWLRG</sequence>
<organism>
    <name type="scientific">Metridium senile</name>
    <name type="common">Brown sea anemone</name>
    <name type="synonym">Frilled sea anemone</name>
    <dbReference type="NCBI Taxonomy" id="6116"/>
    <lineage>
        <taxon>Eukaryota</taxon>
        <taxon>Metazoa</taxon>
        <taxon>Cnidaria</taxon>
        <taxon>Anthozoa</taxon>
        <taxon>Hexacorallia</taxon>
        <taxon>Actiniaria</taxon>
        <taxon>Nynantheae</taxon>
        <taxon>Metridiidae</taxon>
        <taxon>Metridium</taxon>
    </lineage>
</organism>
<proteinExistence type="inferred from homology"/>
<reference key="1">
    <citation type="submission" date="1997-04" db="EMBL/GenBank/DDBJ databases">
        <authorList>
            <person name="Beagley C.T."/>
            <person name="Okimoto R."/>
            <person name="Wolstenholme D.R."/>
        </authorList>
    </citation>
    <scope>NUCLEOTIDE SEQUENCE [GENOMIC DNA]</scope>
    <source>
        <strain>White morph</strain>
    </source>
</reference>
<evidence type="ECO:0000250" key="1"/>
<evidence type="ECO:0000255" key="2"/>
<evidence type="ECO:0000305" key="3"/>
<name>NU4LM_METSE</name>
<geneLocation type="mitochondrion"/>